<reference key="1">
    <citation type="submission" date="2007-07" db="EMBL/GenBank/DDBJ databases">
        <authorList>
            <consortium name="NIH - Mammalian Gene Collection (MGC) project"/>
        </authorList>
    </citation>
    <scope>NUCLEOTIDE SEQUENCE [LARGE SCALE MRNA]</scope>
    <source>
        <strain>Hereford</strain>
        <tissue>Fetal medulla</tissue>
    </source>
</reference>
<reference key="2">
    <citation type="journal article" date="2006" name="J. Mol. Biol.">
        <title>A structural model for the large subunit of the mammalian mitochondrial ribosome.</title>
        <authorList>
            <person name="Mears J.A."/>
            <person name="Sharma M.R."/>
            <person name="Gutell R.R."/>
            <person name="McCook A.S."/>
            <person name="Richardson P.E."/>
            <person name="Caulfield T.R."/>
            <person name="Agrawal R.K."/>
            <person name="Harvey S.C."/>
        </authorList>
    </citation>
    <scope>STRUCTURE BY ELECTRON MICROSCOPY (12 ANGSTROMS)</scope>
    <scope>SUBCELLULAR LOCATION</scope>
</reference>
<evidence type="ECO:0000255" key="1"/>
<evidence type="ECO:0000256" key="2">
    <source>
        <dbReference type="SAM" id="MobiDB-lite"/>
    </source>
</evidence>
<evidence type="ECO:0000269" key="3">
    <source>
    </source>
</evidence>
<evidence type="ECO:0000305" key="4"/>
<feature type="transit peptide" description="Mitochondrion" evidence="1">
    <location>
        <begin position="1"/>
        <end position="50"/>
    </location>
</feature>
<feature type="chain" id="PRO_0000365741" description="Large ribosomal subunit protein uL1m">
    <location>
        <begin position="51"/>
        <end position="325"/>
    </location>
</feature>
<feature type="region of interest" description="Disordered" evidence="2">
    <location>
        <begin position="47"/>
        <end position="66"/>
    </location>
</feature>
<feature type="compositionally biased region" description="Basic and acidic residues" evidence="2">
    <location>
        <begin position="56"/>
        <end position="66"/>
    </location>
</feature>
<gene>
    <name type="primary">MRPL1</name>
</gene>
<accession>A6QPQ5</accession>
<sequence>MAATVRCFGRVLIHHQRCSLATVTSQTSLYPCCIYVPVPNRHFAAAAKPAKKTKKGTKEKASNEKKDDIEKIKSYPFMEGEPEDDVYLKRLYPRQIYEVEKAVNLLKKFQVLDFTNPKQGVYLDLTLDMTLGKKKKVEPFASVLSLPYPFISEMSKVAVFTGNASEIKIAEENGAAFAGGTNLIQKILDDEIQADFYIAVPEIMPELNPLRKKLKTRFPKFNRNSVGRDIPKMLELFKTGLEIKVDEERENFLETKIATLDMPSDQIAANLQAVINEVCRQRPLNLGPFVVRAFLRSSTSEGLLLKIEPLLPKEGETKESDKKAV</sequence>
<comment type="subcellular location">
    <subcellularLocation>
        <location evidence="3">Mitochondrion</location>
    </subcellularLocation>
</comment>
<comment type="similarity">
    <text evidence="4">Belongs to the universal ribosomal protein uL1 family.</text>
</comment>
<dbReference type="EMBL" id="BC149433">
    <property type="protein sequence ID" value="AAI49434.1"/>
    <property type="molecule type" value="mRNA"/>
</dbReference>
<dbReference type="RefSeq" id="NP_001095314.1">
    <property type="nucleotide sequence ID" value="NM_001101844.2"/>
</dbReference>
<dbReference type="PDB" id="2FTC">
    <property type="method" value="EM"/>
    <property type="chains" value="A=123-311"/>
</dbReference>
<dbReference type="PDBsum" id="2FTC"/>
<dbReference type="SMR" id="A6QPQ5"/>
<dbReference type="FunCoup" id="A6QPQ5">
    <property type="interactions" value="1585"/>
</dbReference>
<dbReference type="STRING" id="9913.ENSBTAP00000042782"/>
<dbReference type="PaxDb" id="9913-ENSBTAP00000042782"/>
<dbReference type="Ensembl" id="ENSBTAT00000045390.4">
    <property type="protein sequence ID" value="ENSBTAP00000042782.3"/>
    <property type="gene ID" value="ENSBTAG00000018360.7"/>
</dbReference>
<dbReference type="GeneID" id="504835"/>
<dbReference type="KEGG" id="bta:504835"/>
<dbReference type="CTD" id="65008"/>
<dbReference type="VEuPathDB" id="HostDB:ENSBTAG00000018360"/>
<dbReference type="VGNC" id="VGNC:31614">
    <property type="gene designation" value="MRPL1"/>
</dbReference>
<dbReference type="eggNOG" id="KOG1569">
    <property type="taxonomic scope" value="Eukaryota"/>
</dbReference>
<dbReference type="GeneTree" id="ENSGT00940000163699"/>
<dbReference type="HOGENOM" id="CLU_074129_0_0_1"/>
<dbReference type="InParanoid" id="A6QPQ5"/>
<dbReference type="OMA" id="MWDKSSA"/>
<dbReference type="OrthoDB" id="1747252at2759"/>
<dbReference type="TreeFam" id="TF314989"/>
<dbReference type="Reactome" id="R-BTA-5389840">
    <property type="pathway name" value="Mitochondrial translation elongation"/>
</dbReference>
<dbReference type="Reactome" id="R-BTA-5419276">
    <property type="pathway name" value="Mitochondrial translation termination"/>
</dbReference>
<dbReference type="EvolutionaryTrace" id="A6QPQ5"/>
<dbReference type="Proteomes" id="UP000009136">
    <property type="component" value="Chromosome 6"/>
</dbReference>
<dbReference type="Bgee" id="ENSBTAG00000018360">
    <property type="expression patterns" value="Expressed in tongue muscle and 105 other cell types or tissues"/>
</dbReference>
<dbReference type="GO" id="GO:0015934">
    <property type="term" value="C:large ribosomal subunit"/>
    <property type="evidence" value="ECO:0007669"/>
    <property type="project" value="InterPro"/>
</dbReference>
<dbReference type="GO" id="GO:0005743">
    <property type="term" value="C:mitochondrial inner membrane"/>
    <property type="evidence" value="ECO:0000304"/>
    <property type="project" value="Reactome"/>
</dbReference>
<dbReference type="GO" id="GO:0003723">
    <property type="term" value="F:RNA binding"/>
    <property type="evidence" value="ECO:0007669"/>
    <property type="project" value="InterPro"/>
</dbReference>
<dbReference type="GO" id="GO:0003735">
    <property type="term" value="F:structural constituent of ribosome"/>
    <property type="evidence" value="ECO:0007669"/>
    <property type="project" value="InterPro"/>
</dbReference>
<dbReference type="GO" id="GO:0006412">
    <property type="term" value="P:translation"/>
    <property type="evidence" value="ECO:0007669"/>
    <property type="project" value="InterPro"/>
</dbReference>
<dbReference type="FunFam" id="3.40.50.790:FF:000003">
    <property type="entry name" value="39S ribosomal protein L1, mitochondrial"/>
    <property type="match status" value="1"/>
</dbReference>
<dbReference type="Gene3D" id="3.30.190.20">
    <property type="match status" value="1"/>
</dbReference>
<dbReference type="Gene3D" id="3.40.50.790">
    <property type="match status" value="1"/>
</dbReference>
<dbReference type="InterPro" id="IPR023674">
    <property type="entry name" value="Ribosomal_uL1-like"/>
</dbReference>
<dbReference type="InterPro" id="IPR028364">
    <property type="entry name" value="Ribosomal_uL1/biogenesis"/>
</dbReference>
<dbReference type="InterPro" id="IPR016095">
    <property type="entry name" value="Ribosomal_uL1_3-a/b-sand"/>
</dbReference>
<dbReference type="InterPro" id="IPR005879">
    <property type="entry name" value="Ribosomal_uL1_mit"/>
</dbReference>
<dbReference type="NCBIfam" id="TIGR01170">
    <property type="entry name" value="rplA_mito"/>
    <property type="match status" value="1"/>
</dbReference>
<dbReference type="PANTHER" id="PTHR36427">
    <property type="entry name" value="54S RIBOSOMAL PROTEIN L1, MITOCHONDRIAL"/>
    <property type="match status" value="1"/>
</dbReference>
<dbReference type="PANTHER" id="PTHR36427:SF3">
    <property type="entry name" value="LARGE RIBOSOMAL SUBUNIT PROTEIN UL1M"/>
    <property type="match status" value="1"/>
</dbReference>
<dbReference type="Pfam" id="PF00687">
    <property type="entry name" value="Ribosomal_L1"/>
    <property type="match status" value="1"/>
</dbReference>
<dbReference type="SUPFAM" id="SSF56808">
    <property type="entry name" value="Ribosomal protein L1"/>
    <property type="match status" value="1"/>
</dbReference>
<keyword id="KW-0002">3D-structure</keyword>
<keyword id="KW-0496">Mitochondrion</keyword>
<keyword id="KW-1185">Reference proteome</keyword>
<keyword id="KW-0687">Ribonucleoprotein</keyword>
<keyword id="KW-0689">Ribosomal protein</keyword>
<keyword id="KW-0809">Transit peptide</keyword>
<organism>
    <name type="scientific">Bos taurus</name>
    <name type="common">Bovine</name>
    <dbReference type="NCBI Taxonomy" id="9913"/>
    <lineage>
        <taxon>Eukaryota</taxon>
        <taxon>Metazoa</taxon>
        <taxon>Chordata</taxon>
        <taxon>Craniata</taxon>
        <taxon>Vertebrata</taxon>
        <taxon>Euteleostomi</taxon>
        <taxon>Mammalia</taxon>
        <taxon>Eutheria</taxon>
        <taxon>Laurasiatheria</taxon>
        <taxon>Artiodactyla</taxon>
        <taxon>Ruminantia</taxon>
        <taxon>Pecora</taxon>
        <taxon>Bovidae</taxon>
        <taxon>Bovinae</taxon>
        <taxon>Bos</taxon>
    </lineage>
</organism>
<proteinExistence type="evidence at protein level"/>
<name>RM01_BOVIN</name>
<protein>
    <recommendedName>
        <fullName evidence="4">Large ribosomal subunit protein uL1m</fullName>
    </recommendedName>
    <alternativeName>
        <fullName>39S ribosomal protein L1, mitochondrial</fullName>
        <shortName>L1mt</shortName>
        <shortName>MRP-L1</shortName>
    </alternativeName>
</protein>